<dbReference type="EC" id="3.6.5.n1" evidence="1"/>
<dbReference type="EMBL" id="CP001175">
    <property type="protein sequence ID" value="ACK39439.1"/>
    <property type="molecule type" value="Genomic_DNA"/>
</dbReference>
<dbReference type="RefSeq" id="WP_003726525.1">
    <property type="nucleotide sequence ID" value="NC_011660.1"/>
</dbReference>
<dbReference type="SMR" id="B8DE32"/>
<dbReference type="GeneID" id="86846403"/>
<dbReference type="KEGG" id="lmh:LMHCC_1091"/>
<dbReference type="HOGENOM" id="CLU_009995_3_3_9"/>
<dbReference type="GO" id="GO:0005886">
    <property type="term" value="C:plasma membrane"/>
    <property type="evidence" value="ECO:0007669"/>
    <property type="project" value="UniProtKB-SubCell"/>
</dbReference>
<dbReference type="GO" id="GO:0005525">
    <property type="term" value="F:GTP binding"/>
    <property type="evidence" value="ECO:0007669"/>
    <property type="project" value="UniProtKB-UniRule"/>
</dbReference>
<dbReference type="GO" id="GO:0003924">
    <property type="term" value="F:GTPase activity"/>
    <property type="evidence" value="ECO:0007669"/>
    <property type="project" value="UniProtKB-UniRule"/>
</dbReference>
<dbReference type="GO" id="GO:0043022">
    <property type="term" value="F:ribosome binding"/>
    <property type="evidence" value="ECO:0007669"/>
    <property type="project" value="UniProtKB-UniRule"/>
</dbReference>
<dbReference type="GO" id="GO:0003746">
    <property type="term" value="F:translation elongation factor activity"/>
    <property type="evidence" value="ECO:0007669"/>
    <property type="project" value="UniProtKB-UniRule"/>
</dbReference>
<dbReference type="GO" id="GO:0045727">
    <property type="term" value="P:positive regulation of translation"/>
    <property type="evidence" value="ECO:0007669"/>
    <property type="project" value="UniProtKB-UniRule"/>
</dbReference>
<dbReference type="CDD" id="cd03699">
    <property type="entry name" value="EF4_II"/>
    <property type="match status" value="1"/>
</dbReference>
<dbReference type="CDD" id="cd16260">
    <property type="entry name" value="EF4_III"/>
    <property type="match status" value="1"/>
</dbReference>
<dbReference type="CDD" id="cd01890">
    <property type="entry name" value="LepA"/>
    <property type="match status" value="1"/>
</dbReference>
<dbReference type="CDD" id="cd03709">
    <property type="entry name" value="lepA_C"/>
    <property type="match status" value="1"/>
</dbReference>
<dbReference type="FunFam" id="3.40.50.300:FF:000078">
    <property type="entry name" value="Elongation factor 4"/>
    <property type="match status" value="1"/>
</dbReference>
<dbReference type="FunFam" id="2.40.30.10:FF:000015">
    <property type="entry name" value="Translation factor GUF1, mitochondrial"/>
    <property type="match status" value="1"/>
</dbReference>
<dbReference type="FunFam" id="3.30.70.240:FF:000007">
    <property type="entry name" value="Translation factor GUF1, mitochondrial"/>
    <property type="match status" value="1"/>
</dbReference>
<dbReference type="FunFam" id="3.30.70.2570:FF:000001">
    <property type="entry name" value="Translation factor GUF1, mitochondrial"/>
    <property type="match status" value="1"/>
</dbReference>
<dbReference type="FunFam" id="3.30.70.870:FF:000004">
    <property type="entry name" value="Translation factor GUF1, mitochondrial"/>
    <property type="match status" value="1"/>
</dbReference>
<dbReference type="Gene3D" id="3.30.70.240">
    <property type="match status" value="1"/>
</dbReference>
<dbReference type="Gene3D" id="3.30.70.2570">
    <property type="entry name" value="Elongation factor 4, C-terminal domain"/>
    <property type="match status" value="1"/>
</dbReference>
<dbReference type="Gene3D" id="3.30.70.870">
    <property type="entry name" value="Elongation Factor G (Translational Gtpase), domain 3"/>
    <property type="match status" value="1"/>
</dbReference>
<dbReference type="Gene3D" id="3.40.50.300">
    <property type="entry name" value="P-loop containing nucleotide triphosphate hydrolases"/>
    <property type="match status" value="1"/>
</dbReference>
<dbReference type="Gene3D" id="2.40.30.10">
    <property type="entry name" value="Translation factors"/>
    <property type="match status" value="1"/>
</dbReference>
<dbReference type="HAMAP" id="MF_00071">
    <property type="entry name" value="LepA"/>
    <property type="match status" value="1"/>
</dbReference>
<dbReference type="InterPro" id="IPR006297">
    <property type="entry name" value="EF-4"/>
</dbReference>
<dbReference type="InterPro" id="IPR035647">
    <property type="entry name" value="EFG_III/V"/>
</dbReference>
<dbReference type="InterPro" id="IPR000640">
    <property type="entry name" value="EFG_V-like"/>
</dbReference>
<dbReference type="InterPro" id="IPR004161">
    <property type="entry name" value="EFTu-like_2"/>
</dbReference>
<dbReference type="InterPro" id="IPR031157">
    <property type="entry name" value="G_TR_CS"/>
</dbReference>
<dbReference type="InterPro" id="IPR038363">
    <property type="entry name" value="LepA_C_sf"/>
</dbReference>
<dbReference type="InterPro" id="IPR013842">
    <property type="entry name" value="LepA_CTD"/>
</dbReference>
<dbReference type="InterPro" id="IPR035654">
    <property type="entry name" value="LepA_IV"/>
</dbReference>
<dbReference type="InterPro" id="IPR027417">
    <property type="entry name" value="P-loop_NTPase"/>
</dbReference>
<dbReference type="InterPro" id="IPR005225">
    <property type="entry name" value="Small_GTP-bd"/>
</dbReference>
<dbReference type="InterPro" id="IPR000795">
    <property type="entry name" value="T_Tr_GTP-bd_dom"/>
</dbReference>
<dbReference type="NCBIfam" id="TIGR01393">
    <property type="entry name" value="lepA"/>
    <property type="match status" value="1"/>
</dbReference>
<dbReference type="NCBIfam" id="TIGR00231">
    <property type="entry name" value="small_GTP"/>
    <property type="match status" value="1"/>
</dbReference>
<dbReference type="PANTHER" id="PTHR43512:SF4">
    <property type="entry name" value="TRANSLATION FACTOR GUF1 HOMOLOG, CHLOROPLASTIC"/>
    <property type="match status" value="1"/>
</dbReference>
<dbReference type="PANTHER" id="PTHR43512">
    <property type="entry name" value="TRANSLATION FACTOR GUF1-RELATED"/>
    <property type="match status" value="1"/>
</dbReference>
<dbReference type="Pfam" id="PF00679">
    <property type="entry name" value="EFG_C"/>
    <property type="match status" value="1"/>
</dbReference>
<dbReference type="Pfam" id="PF00009">
    <property type="entry name" value="GTP_EFTU"/>
    <property type="match status" value="1"/>
</dbReference>
<dbReference type="Pfam" id="PF03144">
    <property type="entry name" value="GTP_EFTU_D2"/>
    <property type="match status" value="1"/>
</dbReference>
<dbReference type="Pfam" id="PF06421">
    <property type="entry name" value="LepA_C"/>
    <property type="match status" value="1"/>
</dbReference>
<dbReference type="PRINTS" id="PR00315">
    <property type="entry name" value="ELONGATNFCT"/>
</dbReference>
<dbReference type="SMART" id="SM00838">
    <property type="entry name" value="EFG_C"/>
    <property type="match status" value="1"/>
</dbReference>
<dbReference type="SUPFAM" id="SSF54980">
    <property type="entry name" value="EF-G C-terminal domain-like"/>
    <property type="match status" value="2"/>
</dbReference>
<dbReference type="SUPFAM" id="SSF52540">
    <property type="entry name" value="P-loop containing nucleoside triphosphate hydrolases"/>
    <property type="match status" value="1"/>
</dbReference>
<dbReference type="PROSITE" id="PS00301">
    <property type="entry name" value="G_TR_1"/>
    <property type="match status" value="1"/>
</dbReference>
<dbReference type="PROSITE" id="PS51722">
    <property type="entry name" value="G_TR_2"/>
    <property type="match status" value="1"/>
</dbReference>
<sequence length="608" mass="67823">MNKEEMNARQKKIRNFSIIAHIDHGKSTLADRILEQTGALTHREMKNQLLDSMDLERERGITIKLNAVQLKYKAKDGETYIFHLIDTPGHVDFTYEVSRSLAACEGAILVVDAAQGIEAQTLANVYLALDNDLEILPVINKIDLPAADPERVREEIEDVIGLDASDAVLASAKSGIGIEDILEQIVEKVPEPSGDVNKPLKALIFDSVFDAYRGVIANIRIMDGVVKAGDRIKMMSNGKEFEVTEVGVFSPKATPRDELLVGDVGYLTAAIKNVGDTRVGDTITLANNPAEEALDGYRKLNPMVYCGLYPIDSSKYNDLRDALEKLELNDSALQFEAETSQALGFGFRCGFLGLLHMEIIQERIEREFNIDLITTAPSVIYHVNLTDGSNIVVDNPAEMPEPGVIESVEEPYVKATVMVPNDYVGAVMELAQNKRGNFITMEYLDDIRVSIVYEIPLSEIVYDFFDQLKSSTKGYASFDYELIGYKASKLVKMDILLNAEKVDALSFIVHRDFAYERGKIIVEKLKELIPRQQFEVPIQAAIATKIVSRSTIKALRKNVLAKCYGGDVSRKRKLLEKQKEGKKRMKQIGSVEVPQEAFMAILKMDESK</sequence>
<name>LEPA_LISMH</name>
<proteinExistence type="inferred from homology"/>
<evidence type="ECO:0000255" key="1">
    <source>
        <dbReference type="HAMAP-Rule" id="MF_00071"/>
    </source>
</evidence>
<protein>
    <recommendedName>
        <fullName evidence="1">Elongation factor 4</fullName>
        <shortName evidence="1">EF-4</shortName>
        <ecNumber evidence="1">3.6.5.n1</ecNumber>
    </recommendedName>
    <alternativeName>
        <fullName evidence="1">Ribosomal back-translocase LepA</fullName>
    </alternativeName>
</protein>
<keyword id="KW-1003">Cell membrane</keyword>
<keyword id="KW-0342">GTP-binding</keyword>
<keyword id="KW-0378">Hydrolase</keyword>
<keyword id="KW-0472">Membrane</keyword>
<keyword id="KW-0547">Nucleotide-binding</keyword>
<keyword id="KW-0648">Protein biosynthesis</keyword>
<gene>
    <name evidence="1" type="primary">lepA</name>
    <name type="ordered locus">LMHCC_1091</name>
</gene>
<feature type="chain" id="PRO_1000190815" description="Elongation factor 4">
    <location>
        <begin position="1"/>
        <end position="608"/>
    </location>
</feature>
<feature type="domain" description="tr-type G">
    <location>
        <begin position="11"/>
        <end position="193"/>
    </location>
</feature>
<feature type="binding site" evidence="1">
    <location>
        <begin position="23"/>
        <end position="28"/>
    </location>
    <ligand>
        <name>GTP</name>
        <dbReference type="ChEBI" id="CHEBI:37565"/>
    </ligand>
</feature>
<feature type="binding site" evidence="1">
    <location>
        <begin position="140"/>
        <end position="143"/>
    </location>
    <ligand>
        <name>GTP</name>
        <dbReference type="ChEBI" id="CHEBI:37565"/>
    </ligand>
</feature>
<accession>B8DE32</accession>
<comment type="function">
    <text evidence="1">Required for accurate and efficient protein synthesis under certain stress conditions. May act as a fidelity factor of the translation reaction, by catalyzing a one-codon backward translocation of tRNAs on improperly translocated ribosomes. Back-translocation proceeds from a post-translocation (POST) complex to a pre-translocation (PRE) complex, thus giving elongation factor G a second chance to translocate the tRNAs correctly. Binds to ribosomes in a GTP-dependent manner.</text>
</comment>
<comment type="catalytic activity">
    <reaction evidence="1">
        <text>GTP + H2O = GDP + phosphate + H(+)</text>
        <dbReference type="Rhea" id="RHEA:19669"/>
        <dbReference type="ChEBI" id="CHEBI:15377"/>
        <dbReference type="ChEBI" id="CHEBI:15378"/>
        <dbReference type="ChEBI" id="CHEBI:37565"/>
        <dbReference type="ChEBI" id="CHEBI:43474"/>
        <dbReference type="ChEBI" id="CHEBI:58189"/>
        <dbReference type="EC" id="3.6.5.n1"/>
    </reaction>
</comment>
<comment type="subcellular location">
    <subcellularLocation>
        <location evidence="1">Cell membrane</location>
        <topology evidence="1">Peripheral membrane protein</topology>
        <orientation evidence="1">Cytoplasmic side</orientation>
    </subcellularLocation>
</comment>
<comment type="similarity">
    <text evidence="1">Belongs to the TRAFAC class translation factor GTPase superfamily. Classic translation factor GTPase family. LepA subfamily.</text>
</comment>
<reference key="1">
    <citation type="journal article" date="2011" name="J. Bacteriol.">
        <title>Genome sequence of lineage III Listeria monocytogenes strain HCC23.</title>
        <authorList>
            <person name="Steele C.L."/>
            <person name="Donaldson J.R."/>
            <person name="Paul D."/>
            <person name="Banes M.M."/>
            <person name="Arick T."/>
            <person name="Bridges S.M."/>
            <person name="Lawrence M.L."/>
        </authorList>
    </citation>
    <scope>NUCLEOTIDE SEQUENCE [LARGE SCALE GENOMIC DNA]</scope>
    <source>
        <strain>HCC23</strain>
    </source>
</reference>
<organism>
    <name type="scientific">Listeria monocytogenes serotype 4a (strain HCC23)</name>
    <dbReference type="NCBI Taxonomy" id="552536"/>
    <lineage>
        <taxon>Bacteria</taxon>
        <taxon>Bacillati</taxon>
        <taxon>Bacillota</taxon>
        <taxon>Bacilli</taxon>
        <taxon>Bacillales</taxon>
        <taxon>Listeriaceae</taxon>
        <taxon>Listeria</taxon>
    </lineage>
</organism>